<proteinExistence type="inferred from homology"/>
<organism>
    <name type="scientific">Blochmanniella floridana</name>
    <dbReference type="NCBI Taxonomy" id="203907"/>
    <lineage>
        <taxon>Bacteria</taxon>
        <taxon>Pseudomonadati</taxon>
        <taxon>Pseudomonadota</taxon>
        <taxon>Gammaproteobacteria</taxon>
        <taxon>Enterobacterales</taxon>
        <taxon>Enterobacteriaceae</taxon>
        <taxon>ant endosymbionts</taxon>
        <taxon>Candidatus Blochmanniella</taxon>
    </lineage>
</organism>
<protein>
    <recommendedName>
        <fullName evidence="1">Small ribosomal subunit protein uS3</fullName>
    </recommendedName>
    <alternativeName>
        <fullName evidence="2">30S ribosomal protein S3</fullName>
    </alternativeName>
</protein>
<name>RS3_BLOFL</name>
<dbReference type="EMBL" id="BX248583">
    <property type="protein sequence ID" value="CAD83712.1"/>
    <property type="molecule type" value="Genomic_DNA"/>
</dbReference>
<dbReference type="SMR" id="Q7VQE2"/>
<dbReference type="STRING" id="203907.Bfl197"/>
<dbReference type="KEGG" id="bfl:Bfl197"/>
<dbReference type="eggNOG" id="COG0092">
    <property type="taxonomic scope" value="Bacteria"/>
</dbReference>
<dbReference type="HOGENOM" id="CLU_058591_0_2_6"/>
<dbReference type="OrthoDB" id="9806396at2"/>
<dbReference type="Proteomes" id="UP000002192">
    <property type="component" value="Chromosome"/>
</dbReference>
<dbReference type="GO" id="GO:0022627">
    <property type="term" value="C:cytosolic small ribosomal subunit"/>
    <property type="evidence" value="ECO:0007669"/>
    <property type="project" value="TreeGrafter"/>
</dbReference>
<dbReference type="GO" id="GO:0003729">
    <property type="term" value="F:mRNA binding"/>
    <property type="evidence" value="ECO:0007669"/>
    <property type="project" value="UniProtKB-UniRule"/>
</dbReference>
<dbReference type="GO" id="GO:0019843">
    <property type="term" value="F:rRNA binding"/>
    <property type="evidence" value="ECO:0007669"/>
    <property type="project" value="UniProtKB-UniRule"/>
</dbReference>
<dbReference type="GO" id="GO:0003735">
    <property type="term" value="F:structural constituent of ribosome"/>
    <property type="evidence" value="ECO:0007669"/>
    <property type="project" value="InterPro"/>
</dbReference>
<dbReference type="GO" id="GO:0006412">
    <property type="term" value="P:translation"/>
    <property type="evidence" value="ECO:0007669"/>
    <property type="project" value="UniProtKB-UniRule"/>
</dbReference>
<dbReference type="CDD" id="cd02412">
    <property type="entry name" value="KH-II_30S_S3"/>
    <property type="match status" value="1"/>
</dbReference>
<dbReference type="FunFam" id="3.30.1140.32:FF:000001">
    <property type="entry name" value="30S ribosomal protein S3"/>
    <property type="match status" value="1"/>
</dbReference>
<dbReference type="FunFam" id="3.30.300.20:FF:000001">
    <property type="entry name" value="30S ribosomal protein S3"/>
    <property type="match status" value="1"/>
</dbReference>
<dbReference type="Gene3D" id="3.30.300.20">
    <property type="match status" value="1"/>
</dbReference>
<dbReference type="Gene3D" id="3.30.1140.32">
    <property type="entry name" value="Ribosomal protein S3, C-terminal domain"/>
    <property type="match status" value="1"/>
</dbReference>
<dbReference type="HAMAP" id="MF_01309_B">
    <property type="entry name" value="Ribosomal_uS3_B"/>
    <property type="match status" value="1"/>
</dbReference>
<dbReference type="InterPro" id="IPR004087">
    <property type="entry name" value="KH_dom"/>
</dbReference>
<dbReference type="InterPro" id="IPR015946">
    <property type="entry name" value="KH_dom-like_a/b"/>
</dbReference>
<dbReference type="InterPro" id="IPR004044">
    <property type="entry name" value="KH_dom_type_2"/>
</dbReference>
<dbReference type="InterPro" id="IPR009019">
    <property type="entry name" value="KH_sf_prok-type"/>
</dbReference>
<dbReference type="InterPro" id="IPR036419">
    <property type="entry name" value="Ribosomal_S3_C_sf"/>
</dbReference>
<dbReference type="InterPro" id="IPR005704">
    <property type="entry name" value="Ribosomal_uS3_bac-typ"/>
</dbReference>
<dbReference type="InterPro" id="IPR001351">
    <property type="entry name" value="Ribosomal_uS3_C"/>
</dbReference>
<dbReference type="InterPro" id="IPR018280">
    <property type="entry name" value="Ribosomal_uS3_CS"/>
</dbReference>
<dbReference type="NCBIfam" id="TIGR01009">
    <property type="entry name" value="rpsC_bact"/>
    <property type="match status" value="1"/>
</dbReference>
<dbReference type="PANTHER" id="PTHR11760">
    <property type="entry name" value="30S/40S RIBOSOMAL PROTEIN S3"/>
    <property type="match status" value="1"/>
</dbReference>
<dbReference type="PANTHER" id="PTHR11760:SF19">
    <property type="entry name" value="SMALL RIBOSOMAL SUBUNIT PROTEIN US3C"/>
    <property type="match status" value="1"/>
</dbReference>
<dbReference type="Pfam" id="PF07650">
    <property type="entry name" value="KH_2"/>
    <property type="match status" value="1"/>
</dbReference>
<dbReference type="Pfam" id="PF00189">
    <property type="entry name" value="Ribosomal_S3_C"/>
    <property type="match status" value="1"/>
</dbReference>
<dbReference type="SMART" id="SM00322">
    <property type="entry name" value="KH"/>
    <property type="match status" value="1"/>
</dbReference>
<dbReference type="SUPFAM" id="SSF54814">
    <property type="entry name" value="Prokaryotic type KH domain (KH-domain type II)"/>
    <property type="match status" value="1"/>
</dbReference>
<dbReference type="SUPFAM" id="SSF54821">
    <property type="entry name" value="Ribosomal protein S3 C-terminal domain"/>
    <property type="match status" value="1"/>
</dbReference>
<dbReference type="PROSITE" id="PS50823">
    <property type="entry name" value="KH_TYPE_2"/>
    <property type="match status" value="1"/>
</dbReference>
<dbReference type="PROSITE" id="PS00548">
    <property type="entry name" value="RIBOSOMAL_S3"/>
    <property type="match status" value="1"/>
</dbReference>
<sequence length="235" mass="26778">MGQKVHPNGMRLGIIKSWHSTWYANNKNFSNNLNNDFEVRKFLLGQLSKALVSRIIIERPAKSIRVTIYTARPGVIIGRKGEDIEKLREKVSKISGVPTKLNISEIRKPELEAKLLADNIASQLERRVIFRRAIKRVVQSAMRLGAKGIKVEVSGRLSGAEIARTEWYREGRVPLHTFRADIDYSLSEAHTSYGVVGVKVWVFKGEILDKVLFHIDKSKDSLINDFSKKKRKSRV</sequence>
<feature type="chain" id="PRO_0000130094" description="Small ribosomal subunit protein uS3">
    <location>
        <begin position="1"/>
        <end position="235"/>
    </location>
</feature>
<feature type="domain" description="KH type-2" evidence="1">
    <location>
        <begin position="39"/>
        <end position="107"/>
    </location>
</feature>
<evidence type="ECO:0000255" key="1">
    <source>
        <dbReference type="HAMAP-Rule" id="MF_01309"/>
    </source>
</evidence>
<evidence type="ECO:0000305" key="2"/>
<reference key="1">
    <citation type="journal article" date="2003" name="Proc. Natl. Acad. Sci. U.S.A.">
        <title>The genome sequence of Blochmannia floridanus: comparative analysis of reduced genomes.</title>
        <authorList>
            <person name="Gil R."/>
            <person name="Silva F.J."/>
            <person name="Zientz E."/>
            <person name="Delmotte F."/>
            <person name="Gonzalez-Candelas F."/>
            <person name="Latorre A."/>
            <person name="Rausell C."/>
            <person name="Kamerbeek J."/>
            <person name="Gadau J."/>
            <person name="Hoelldobler B."/>
            <person name="van Ham R.C.H.J."/>
            <person name="Gross R."/>
            <person name="Moya A."/>
        </authorList>
    </citation>
    <scope>NUCLEOTIDE SEQUENCE [LARGE SCALE GENOMIC DNA]</scope>
</reference>
<keyword id="KW-1185">Reference proteome</keyword>
<keyword id="KW-0687">Ribonucleoprotein</keyword>
<keyword id="KW-0689">Ribosomal protein</keyword>
<keyword id="KW-0694">RNA-binding</keyword>
<keyword id="KW-0699">rRNA-binding</keyword>
<gene>
    <name evidence="1" type="primary">rpsC</name>
    <name type="ordered locus">Bfl197</name>
</gene>
<comment type="function">
    <text evidence="1">Binds the lower part of the 30S subunit head. Binds mRNA in the 70S ribosome, positioning it for translation.</text>
</comment>
<comment type="subunit">
    <text evidence="1">Part of the 30S ribosomal subunit. Forms a tight complex with proteins S10 and S14.</text>
</comment>
<comment type="similarity">
    <text evidence="1">Belongs to the universal ribosomal protein uS3 family.</text>
</comment>
<accession>Q7VQE2</accession>